<accession>Q9JN65</accession>
<dbReference type="EC" id="5.6.2.1" evidence="1"/>
<dbReference type="EMBL" id="L35043">
    <property type="protein sequence ID" value="AAF36767.1"/>
    <property type="molecule type" value="Genomic_DNA"/>
</dbReference>
<dbReference type="EMBL" id="AE015450">
    <property type="protein sequence ID" value="AAP56984.1"/>
    <property type="molecule type" value="Genomic_DNA"/>
</dbReference>
<dbReference type="RefSeq" id="WP_011113893.1">
    <property type="nucleotide sequence ID" value="NC_004829.2"/>
</dbReference>
<dbReference type="SMR" id="Q9JN65"/>
<dbReference type="GeneID" id="93510471"/>
<dbReference type="KEGG" id="mga:MGA_0454"/>
<dbReference type="PATRIC" id="fig|233150.7.peg.711"/>
<dbReference type="HOGENOM" id="CLU_002929_4_3_14"/>
<dbReference type="OrthoDB" id="9804262at2"/>
<dbReference type="Proteomes" id="UP000001418">
    <property type="component" value="Chromosome"/>
</dbReference>
<dbReference type="GO" id="GO:0005694">
    <property type="term" value="C:chromosome"/>
    <property type="evidence" value="ECO:0007669"/>
    <property type="project" value="InterPro"/>
</dbReference>
<dbReference type="GO" id="GO:0003677">
    <property type="term" value="F:DNA binding"/>
    <property type="evidence" value="ECO:0007669"/>
    <property type="project" value="UniProtKB-KW"/>
</dbReference>
<dbReference type="GO" id="GO:0003917">
    <property type="term" value="F:DNA topoisomerase type I (single strand cut, ATP-independent) activity"/>
    <property type="evidence" value="ECO:0007669"/>
    <property type="project" value="UniProtKB-UniRule"/>
</dbReference>
<dbReference type="GO" id="GO:0008270">
    <property type="term" value="F:zinc ion binding"/>
    <property type="evidence" value="ECO:0007669"/>
    <property type="project" value="UniProtKB-KW"/>
</dbReference>
<dbReference type="GO" id="GO:0006265">
    <property type="term" value="P:DNA topological change"/>
    <property type="evidence" value="ECO:0007669"/>
    <property type="project" value="UniProtKB-UniRule"/>
</dbReference>
<dbReference type="CDD" id="cd00186">
    <property type="entry name" value="TOP1Ac"/>
    <property type="match status" value="1"/>
</dbReference>
<dbReference type="CDD" id="cd03363">
    <property type="entry name" value="TOPRIM_TopoIA_TopoI"/>
    <property type="match status" value="1"/>
</dbReference>
<dbReference type="Gene3D" id="3.40.50.140">
    <property type="match status" value="1"/>
</dbReference>
<dbReference type="Gene3D" id="3.30.65.10">
    <property type="entry name" value="Bacterial Topoisomerase I, domain 1"/>
    <property type="match status" value="2"/>
</dbReference>
<dbReference type="Gene3D" id="1.10.460.10">
    <property type="entry name" value="Topoisomerase I, domain 2"/>
    <property type="match status" value="1"/>
</dbReference>
<dbReference type="Gene3D" id="2.70.20.10">
    <property type="entry name" value="Topoisomerase I, domain 3"/>
    <property type="match status" value="1"/>
</dbReference>
<dbReference type="Gene3D" id="1.10.290.10">
    <property type="entry name" value="Topoisomerase I, domain 4"/>
    <property type="match status" value="1"/>
</dbReference>
<dbReference type="HAMAP" id="MF_00952">
    <property type="entry name" value="Topoisom_1_prok"/>
    <property type="match status" value="1"/>
</dbReference>
<dbReference type="InterPro" id="IPR000380">
    <property type="entry name" value="Topo_IA"/>
</dbReference>
<dbReference type="InterPro" id="IPR003601">
    <property type="entry name" value="Topo_IA_2"/>
</dbReference>
<dbReference type="InterPro" id="IPR023406">
    <property type="entry name" value="Topo_IA_AS"/>
</dbReference>
<dbReference type="InterPro" id="IPR013497">
    <property type="entry name" value="Topo_IA_cen"/>
</dbReference>
<dbReference type="InterPro" id="IPR013824">
    <property type="entry name" value="Topo_IA_cen_sub1"/>
</dbReference>
<dbReference type="InterPro" id="IPR013825">
    <property type="entry name" value="Topo_IA_cen_sub2"/>
</dbReference>
<dbReference type="InterPro" id="IPR013826">
    <property type="entry name" value="Topo_IA_cen_sub3"/>
</dbReference>
<dbReference type="InterPro" id="IPR023405">
    <property type="entry name" value="Topo_IA_core_domain"/>
</dbReference>
<dbReference type="InterPro" id="IPR003602">
    <property type="entry name" value="Topo_IA_DNA-bd_dom"/>
</dbReference>
<dbReference type="InterPro" id="IPR013498">
    <property type="entry name" value="Topo_IA_Znf"/>
</dbReference>
<dbReference type="InterPro" id="IPR005733">
    <property type="entry name" value="TopoI_bac-type"/>
</dbReference>
<dbReference type="InterPro" id="IPR028612">
    <property type="entry name" value="Topoisom_1_IA"/>
</dbReference>
<dbReference type="InterPro" id="IPR006171">
    <property type="entry name" value="TOPRIM_dom"/>
</dbReference>
<dbReference type="InterPro" id="IPR034149">
    <property type="entry name" value="TOPRIM_TopoI"/>
</dbReference>
<dbReference type="NCBIfam" id="TIGR01051">
    <property type="entry name" value="topA_bact"/>
    <property type="match status" value="1"/>
</dbReference>
<dbReference type="PANTHER" id="PTHR42785:SF1">
    <property type="entry name" value="DNA TOPOISOMERASE"/>
    <property type="match status" value="1"/>
</dbReference>
<dbReference type="PANTHER" id="PTHR42785">
    <property type="entry name" value="DNA TOPOISOMERASE, TYPE IA, CORE"/>
    <property type="match status" value="1"/>
</dbReference>
<dbReference type="Pfam" id="PF01131">
    <property type="entry name" value="Topoisom_bac"/>
    <property type="match status" value="1"/>
</dbReference>
<dbReference type="Pfam" id="PF01751">
    <property type="entry name" value="Toprim"/>
    <property type="match status" value="1"/>
</dbReference>
<dbReference type="Pfam" id="PF01396">
    <property type="entry name" value="Zn_ribbon_Top1"/>
    <property type="match status" value="2"/>
</dbReference>
<dbReference type="PRINTS" id="PR00417">
    <property type="entry name" value="PRTPISMRASEI"/>
</dbReference>
<dbReference type="SMART" id="SM00437">
    <property type="entry name" value="TOP1Ac"/>
    <property type="match status" value="1"/>
</dbReference>
<dbReference type="SMART" id="SM00436">
    <property type="entry name" value="TOP1Bc"/>
    <property type="match status" value="1"/>
</dbReference>
<dbReference type="SMART" id="SM00493">
    <property type="entry name" value="TOPRIM"/>
    <property type="match status" value="1"/>
</dbReference>
<dbReference type="SUPFAM" id="SSF56712">
    <property type="entry name" value="Prokaryotic type I DNA topoisomerase"/>
    <property type="match status" value="1"/>
</dbReference>
<dbReference type="SUPFAM" id="SSF57783">
    <property type="entry name" value="Zinc beta-ribbon"/>
    <property type="match status" value="2"/>
</dbReference>
<dbReference type="PROSITE" id="PS00396">
    <property type="entry name" value="TOPO_IA_1"/>
    <property type="match status" value="1"/>
</dbReference>
<dbReference type="PROSITE" id="PS52039">
    <property type="entry name" value="TOPO_IA_2"/>
    <property type="match status" value="1"/>
</dbReference>
<dbReference type="PROSITE" id="PS50880">
    <property type="entry name" value="TOPRIM"/>
    <property type="match status" value="1"/>
</dbReference>
<reference key="1">
    <citation type="submission" date="2000-02" db="EMBL/GenBank/DDBJ databases">
        <authorList>
            <person name="Skamrov A.V."/>
            <person name="Feoktistova E.S."/>
            <person name="Gol'dman M.A."/>
            <person name="Bibilashvili R.S."/>
        </authorList>
    </citation>
    <scope>NUCLEOTIDE SEQUENCE [GENOMIC DNA]</scope>
    <source>
        <strain>A5969Var.B</strain>
    </source>
</reference>
<reference key="2">
    <citation type="journal article" date="2003" name="Microbiology">
        <title>The complete genome sequence of the avian pathogen Mycoplasma gallisepticum strain R(low).</title>
        <authorList>
            <person name="Papazisi L."/>
            <person name="Gorton T.S."/>
            <person name="Kutish G."/>
            <person name="Markham P.F."/>
            <person name="Browning G.F."/>
            <person name="Nguyen D.K."/>
            <person name="Swartzell S."/>
            <person name="Madan A."/>
            <person name="Mahairas G."/>
            <person name="Geary S.J."/>
        </authorList>
    </citation>
    <scope>NUCLEOTIDE SEQUENCE [LARGE SCALE GENOMIC DNA]</scope>
    <source>
        <strain>R(low / passage 15 / clone 2)</strain>
    </source>
</reference>
<reference key="3">
    <citation type="journal article" date="1991" name="FEBS Lett.">
        <title>Mycoplasma gallisepticum strain S6 genome contains three regions hybridizing with 16 S rRNA and two regions hybridizing with 23 S and 5 S rRNA.</title>
        <authorList>
            <person name="Skamrov A.V."/>
            <person name="Bibilashvili R.S."/>
        </authorList>
    </citation>
    <scope>NUCLEOTIDE SEQUENCE [GENOMIC DNA] OF 706-719</scope>
    <source>
        <strain>A5969Var.B</strain>
    </source>
</reference>
<feature type="chain" id="PRO_0000145154" description="DNA topoisomerase 1">
    <location>
        <begin position="1"/>
        <end position="719"/>
    </location>
</feature>
<feature type="domain" description="Toprim" evidence="1">
    <location>
        <begin position="6"/>
        <end position="137"/>
    </location>
</feature>
<feature type="domain" description="Topo IA-type catalytic" evidence="2">
    <location>
        <begin position="156"/>
        <end position="601"/>
    </location>
</feature>
<feature type="zinc finger region" description="C4-type 1">
    <location>
        <begin position="620"/>
        <end position="646"/>
    </location>
</feature>
<feature type="zinc finger region" description="C4-type 2">
    <location>
        <begin position="667"/>
        <end position="699"/>
    </location>
</feature>
<feature type="region of interest" description="Interaction with DNA" evidence="1">
    <location>
        <begin position="189"/>
        <end position="194"/>
    </location>
</feature>
<feature type="active site" description="O-(5'-phospho-DNA)-tyrosine intermediate" evidence="2">
    <location>
        <position position="334"/>
    </location>
</feature>
<feature type="binding site" evidence="1">
    <location>
        <position position="12"/>
    </location>
    <ligand>
        <name>Mg(2+)</name>
        <dbReference type="ChEBI" id="CHEBI:18420"/>
        <note>catalytic</note>
    </ligand>
</feature>
<feature type="binding site" evidence="1">
    <location>
        <position position="106"/>
    </location>
    <ligand>
        <name>Mg(2+)</name>
        <dbReference type="ChEBI" id="CHEBI:18420"/>
        <note>catalytic</note>
    </ligand>
</feature>
<feature type="site" description="Interaction with DNA" evidence="1">
    <location>
        <position position="36"/>
    </location>
</feature>
<feature type="site" description="Interaction with DNA" evidence="1">
    <location>
        <position position="166"/>
    </location>
</feature>
<feature type="site" description="Interaction with DNA" evidence="1">
    <location>
        <position position="167"/>
    </location>
</feature>
<feature type="site" description="Interaction with DNA" evidence="1">
    <location>
        <position position="170"/>
    </location>
</feature>
<feature type="site" description="Interaction with DNA" evidence="1">
    <location>
        <position position="336"/>
    </location>
</feature>
<feature type="site" description="Interaction with DNA" evidence="1">
    <location>
        <position position="532"/>
    </location>
</feature>
<feature type="sequence conflict" description="In Ref. 1; AAF36767." evidence="3" ref="1">
    <original>V</original>
    <variation>T</variation>
    <location>
        <position position="68"/>
    </location>
</feature>
<feature type="sequence conflict" description="In Ref. 1; AAF36767." evidence="3" ref="1">
    <original>F</original>
    <variation>Y</variation>
    <location>
        <position position="244"/>
    </location>
</feature>
<feature type="sequence conflict" description="In Ref. 1; AAF36767." evidence="3" ref="1">
    <original>A</original>
    <variation>P</variation>
    <location>
        <position position="656"/>
    </location>
</feature>
<feature type="sequence conflict" description="In Ref. 1; AAF36767." evidence="3" ref="1">
    <original>K</original>
    <variation>E</variation>
    <location>
        <position position="666"/>
    </location>
</feature>
<keyword id="KW-0238">DNA-binding</keyword>
<keyword id="KW-0413">Isomerase</keyword>
<keyword id="KW-0460">Magnesium</keyword>
<keyword id="KW-0479">Metal-binding</keyword>
<keyword id="KW-1185">Reference proteome</keyword>
<keyword id="KW-0677">Repeat</keyword>
<keyword id="KW-0799">Topoisomerase</keyword>
<keyword id="KW-0862">Zinc</keyword>
<keyword id="KW-0863">Zinc-finger</keyword>
<proteinExistence type="inferred from homology"/>
<protein>
    <recommendedName>
        <fullName evidence="1">DNA topoisomerase 1</fullName>
        <ecNumber evidence="1">5.6.2.1</ecNumber>
    </recommendedName>
    <alternativeName>
        <fullName evidence="1">DNA topoisomerase I</fullName>
    </alternativeName>
    <alternativeName>
        <fullName>Omega-protein</fullName>
    </alternativeName>
    <alternativeName>
        <fullName>Relaxing enzyme</fullName>
    </alternativeName>
    <alternativeName>
        <fullName>Swivelase</fullName>
    </alternativeName>
    <alternativeName>
        <fullName>Untwisting enzyme</fullName>
    </alternativeName>
</protein>
<name>TOP1_MYCGA</name>
<sequence>MTNHSSKILVIESPNKVKTIKKYLTDDYEIVATVGHIRDLPKYTLGFNTEDFVPKWEIIQEKKPAKGVSATKKAKTVKKAVKNKKEIIDELVDKAKKADEIYLATDPDREGEAISWHVYDVLKEKGVNVNKCKRIIFNEISEKAVKNAIANPREIQKDWVSSQITRRRLDRLIGFKLSSLMKSKINADSAGRVQSIALKFITEREELINKFVPRFWWTLDVILKDGTELMLRKIDEKLKDKLGFKELEEVSGIDFNTKEDAELVKQHLSDKYRVYAIDTPKLKSSYPKEVYKTSTLQQDAINKLKWRSMKITSVAQELYEGVTIDDEQIALISYPRTDSTRLSPEYGKTVLDFVAKTYGKDYVATQSQLNGETKANKKQKAKVQDAHEAIHPIDISITPDSVKNKISSDQYSLYKLIWTRTVAHYMAAAVYELVNIRFINNNNKFYAVNNTLKFDGYKKIYTHYDDKDHLRKLDLNHFAIDKEFEAKDVLLNEHQTKPPARFTQATLIEALETEGIGRPSTYSTILDIVLKRNYAELVNGRYYKTTDLGQKLAFELDKNFPTIINKEFTKNMETTLDEIAQGTVNDVSYLQAFWNDFSEVLNEAKTNIVKKVEYIEGKNCPNCSSQLVRREGRYGPFVGCSNFPKCKFIEKSEQKAKEIVYEEGVKCELCHAKLIRRVAKKKGRNKDNTFLGCSNFPKCKYTKSLEPEKDETIRDSTII</sequence>
<gene>
    <name evidence="1" type="primary">topA</name>
    <name type="ordered locus">MYCGA6340</name>
    <name type="ORF">MGA_0454</name>
</gene>
<comment type="function">
    <text evidence="1">Releases the supercoiling and torsional tension of DNA, which is introduced during the DNA replication and transcription, by transiently cleaving and rejoining one strand of the DNA duplex. Introduces a single-strand break via transesterification at a target site in duplex DNA. The scissile phosphodiester is attacked by the catalytic tyrosine of the enzyme, resulting in the formation of a DNA-(5'-phosphotyrosyl)-enzyme intermediate and the expulsion of a 3'-OH DNA strand. The free DNA strand then undergoes passage around the unbroken strand, thus removing DNA supercoils. Finally, in the religation step, the DNA 3'-OH attacks the covalent intermediate to expel the active-site tyrosine and restore the DNA phosphodiester backbone.</text>
</comment>
<comment type="catalytic activity">
    <reaction evidence="1">
        <text>ATP-independent breakage of single-stranded DNA, followed by passage and rejoining.</text>
        <dbReference type="EC" id="5.6.2.1"/>
    </reaction>
</comment>
<comment type="cofactor">
    <cofactor evidence="1">
        <name>Mg(2+)</name>
        <dbReference type="ChEBI" id="CHEBI:18420"/>
    </cofactor>
</comment>
<comment type="subunit">
    <text evidence="1">Monomer.</text>
</comment>
<comment type="similarity">
    <text evidence="1">Belongs to the type IA topoisomerase family.</text>
</comment>
<evidence type="ECO:0000255" key="1">
    <source>
        <dbReference type="HAMAP-Rule" id="MF_00952"/>
    </source>
</evidence>
<evidence type="ECO:0000255" key="2">
    <source>
        <dbReference type="PROSITE-ProRule" id="PRU01383"/>
    </source>
</evidence>
<evidence type="ECO:0000305" key="3"/>
<organism>
    <name type="scientific">Mycoplasmoides gallisepticum (strain R(low / passage 15 / clone 2))</name>
    <name type="common">Mycoplasma gallisepticum</name>
    <dbReference type="NCBI Taxonomy" id="710127"/>
    <lineage>
        <taxon>Bacteria</taxon>
        <taxon>Bacillati</taxon>
        <taxon>Mycoplasmatota</taxon>
        <taxon>Mycoplasmoidales</taxon>
        <taxon>Mycoplasmoidaceae</taxon>
        <taxon>Mycoplasmoides</taxon>
    </lineage>
</organism>